<comment type="function">
    <text evidence="1">Endonuclease that removes tRNA introns. Cleaves pre-tRNA at the 5'- and 3'-splice sites to release the intron. The products are an intron and two tRNA half-molecules bearing 2',3' cyclic phosphate and 5'-OH termini. Recognizes a pseudosymmetric substrate in which 2 bulged loops of 3 bases are separated by a stem of 4 bp.</text>
</comment>
<comment type="catalytic activity">
    <reaction evidence="1">
        <text>pretRNA = a 3'-half-tRNA molecule with a 5'-OH end + a 5'-half-tRNA molecule with a 2',3'-cyclic phosphate end + an intron with a 2',3'-cyclic phosphate and a 5'-hydroxyl terminus.</text>
        <dbReference type="EC" id="4.6.1.16"/>
    </reaction>
</comment>
<comment type="subunit">
    <text evidence="1">Homotetramer; although the tetramer contains four active sites, only two participate in the cleavage. Therefore, it should be considered as a dimer of dimers.</text>
</comment>
<comment type="similarity">
    <text evidence="1">Belongs to the tRNA-intron endonuclease family. Archaeal short subfamily.</text>
</comment>
<proteinExistence type="inferred from homology"/>
<gene>
    <name evidence="1" type="primary">endA</name>
    <name type="ordered locus">YG5714_1783</name>
</gene>
<protein>
    <recommendedName>
        <fullName evidence="1">tRNA-splicing endonuclease</fullName>
        <ecNumber evidence="1">4.6.1.16</ecNumber>
    </recommendedName>
    <alternativeName>
        <fullName evidence="1">tRNA-intron endonuclease</fullName>
    </alternativeName>
</protein>
<reference key="1">
    <citation type="journal article" date="2009" name="Proc. Natl. Acad. Sci. U.S.A.">
        <title>Biogeography of the Sulfolobus islandicus pan-genome.</title>
        <authorList>
            <person name="Reno M.L."/>
            <person name="Held N.L."/>
            <person name="Fields C.J."/>
            <person name="Burke P.V."/>
            <person name="Whitaker R.J."/>
        </authorList>
    </citation>
    <scope>NUCLEOTIDE SEQUENCE [LARGE SCALE GENOMIC DNA]</scope>
    <source>
        <strain>Y.G.57.14 / Yellowstone #1</strain>
    </source>
</reference>
<sequence length="182" mass="20856">MVKALLVGSKVLIPNVDESRYIYSNGFYGKAIGISKPKDPKDIIRPLELSLIESVYLAKKGLIKVIDKNGEVLEYEKLYEYSSKIINKFDIMYRVYEDLREKGFIVRSGVKYGADFAVYTLGPGLEHAPYVVIAVDIDEEITPHELLSFGRVSHSTRKRLVLALVDRKSESVRYIMFKWVKM</sequence>
<keyword id="KW-0456">Lyase</keyword>
<keyword id="KW-0819">tRNA processing</keyword>
<feature type="chain" id="PRO_1000216084" description="tRNA-splicing endonuclease">
    <location>
        <begin position="1"/>
        <end position="182"/>
    </location>
</feature>
<feature type="active site" evidence="1">
    <location>
        <position position="119"/>
    </location>
</feature>
<feature type="active site" evidence="1">
    <location>
        <position position="127"/>
    </location>
</feature>
<feature type="active site" evidence="1">
    <location>
        <position position="158"/>
    </location>
</feature>
<organism>
    <name type="scientific">Saccharolobus islandicus (strain Y.G.57.14 / Yellowstone #1)</name>
    <name type="common">Sulfolobus islandicus</name>
    <dbReference type="NCBI Taxonomy" id="439386"/>
    <lineage>
        <taxon>Archaea</taxon>
        <taxon>Thermoproteota</taxon>
        <taxon>Thermoprotei</taxon>
        <taxon>Sulfolobales</taxon>
        <taxon>Sulfolobaceae</taxon>
        <taxon>Saccharolobus</taxon>
    </lineage>
</organism>
<dbReference type="EC" id="4.6.1.16" evidence="1"/>
<dbReference type="EMBL" id="CP001403">
    <property type="protein sequence ID" value="ACP46040.1"/>
    <property type="molecule type" value="Genomic_DNA"/>
</dbReference>
<dbReference type="RefSeq" id="WP_012713899.1">
    <property type="nucleotide sequence ID" value="NC_012622.1"/>
</dbReference>
<dbReference type="SMR" id="C3N746"/>
<dbReference type="GeneID" id="7807471"/>
<dbReference type="KEGG" id="siy:YG5714_1783"/>
<dbReference type="HOGENOM" id="CLU_114393_0_0_2"/>
<dbReference type="Proteomes" id="UP000002308">
    <property type="component" value="Chromosome"/>
</dbReference>
<dbReference type="GO" id="GO:0005737">
    <property type="term" value="C:cytoplasm"/>
    <property type="evidence" value="ECO:0007669"/>
    <property type="project" value="TreeGrafter"/>
</dbReference>
<dbReference type="GO" id="GO:0016829">
    <property type="term" value="F:lyase activity"/>
    <property type="evidence" value="ECO:0007669"/>
    <property type="project" value="UniProtKB-KW"/>
</dbReference>
<dbReference type="GO" id="GO:0003676">
    <property type="term" value="F:nucleic acid binding"/>
    <property type="evidence" value="ECO:0007669"/>
    <property type="project" value="InterPro"/>
</dbReference>
<dbReference type="GO" id="GO:0000213">
    <property type="term" value="F:tRNA-intron endonuclease activity"/>
    <property type="evidence" value="ECO:0007669"/>
    <property type="project" value="UniProtKB-UniRule"/>
</dbReference>
<dbReference type="GO" id="GO:0006388">
    <property type="term" value="P:tRNA splicing, via endonucleolytic cleavage and ligation"/>
    <property type="evidence" value="ECO:0007669"/>
    <property type="project" value="UniProtKB-UniRule"/>
</dbReference>
<dbReference type="CDD" id="cd22363">
    <property type="entry name" value="tRNA-intron_lyase_C"/>
    <property type="match status" value="1"/>
</dbReference>
<dbReference type="FunFam" id="3.40.1350.10:FF:000006">
    <property type="entry name" value="tRNA-splicing endonuclease"/>
    <property type="match status" value="1"/>
</dbReference>
<dbReference type="Gene3D" id="3.40.1350.10">
    <property type="match status" value="1"/>
</dbReference>
<dbReference type="Gene3D" id="3.40.1170.20">
    <property type="entry name" value="tRNA intron endonuclease, N-terminal domain"/>
    <property type="match status" value="1"/>
</dbReference>
<dbReference type="HAMAP" id="MF_01833">
    <property type="entry name" value="EndA_short"/>
    <property type="match status" value="1"/>
</dbReference>
<dbReference type="InterPro" id="IPR011856">
    <property type="entry name" value="tRNA_endonuc-like_dom_sf"/>
</dbReference>
<dbReference type="InterPro" id="IPR036167">
    <property type="entry name" value="tRNA_intron_Endo_cat-like_sf"/>
</dbReference>
<dbReference type="InterPro" id="IPR006677">
    <property type="entry name" value="tRNA_intron_Endonuc_cat-like"/>
</dbReference>
<dbReference type="InterPro" id="IPR006678">
    <property type="entry name" value="tRNA_intron_Endonuc_N"/>
</dbReference>
<dbReference type="InterPro" id="IPR036740">
    <property type="entry name" value="tRNA_intron_Endonuc_N_sf"/>
</dbReference>
<dbReference type="InterPro" id="IPR006676">
    <property type="entry name" value="tRNA_splic"/>
</dbReference>
<dbReference type="InterPro" id="IPR016442">
    <property type="entry name" value="tRNA_splic_arch_short"/>
</dbReference>
<dbReference type="NCBIfam" id="TIGR00324">
    <property type="entry name" value="endA"/>
    <property type="match status" value="1"/>
</dbReference>
<dbReference type="PANTHER" id="PTHR21227">
    <property type="entry name" value="TRNA-SPLICING ENDONUCLEASE SUBUNIT SEN2"/>
    <property type="match status" value="1"/>
</dbReference>
<dbReference type="PANTHER" id="PTHR21227:SF0">
    <property type="entry name" value="TRNA-SPLICING ENDONUCLEASE SUBUNIT SEN2"/>
    <property type="match status" value="1"/>
</dbReference>
<dbReference type="Pfam" id="PF01974">
    <property type="entry name" value="tRNA_int_endo"/>
    <property type="match status" value="1"/>
</dbReference>
<dbReference type="Pfam" id="PF02778">
    <property type="entry name" value="tRNA_int_endo_N"/>
    <property type="match status" value="1"/>
</dbReference>
<dbReference type="PIRSF" id="PIRSF005285">
    <property type="entry name" value="tRNA_splic_archaea"/>
    <property type="match status" value="1"/>
</dbReference>
<dbReference type="SUPFAM" id="SSF53032">
    <property type="entry name" value="tRNA-intron endonuclease catalytic domain-like"/>
    <property type="match status" value="1"/>
</dbReference>
<dbReference type="SUPFAM" id="SSF55267">
    <property type="entry name" value="tRNA-intron endonuclease N-terminal domain-like"/>
    <property type="match status" value="1"/>
</dbReference>
<name>ENDA_SACI7</name>
<evidence type="ECO:0000255" key="1">
    <source>
        <dbReference type="HAMAP-Rule" id="MF_01833"/>
    </source>
</evidence>
<accession>C3N746</accession>